<feature type="chain" id="PRO_1000045660" description="Probable glycine dehydrogenase (decarboxylating) subunit 1">
    <location>
        <begin position="1"/>
        <end position="456"/>
    </location>
</feature>
<proteinExistence type="inferred from homology"/>
<gene>
    <name evidence="1" type="primary">gcvPA</name>
    <name type="ordered locus">lpp0130</name>
</gene>
<name>GCSPA_LEGPA</name>
<evidence type="ECO:0000255" key="1">
    <source>
        <dbReference type="HAMAP-Rule" id="MF_00712"/>
    </source>
</evidence>
<organism>
    <name type="scientific">Legionella pneumophila (strain Paris)</name>
    <dbReference type="NCBI Taxonomy" id="297246"/>
    <lineage>
        <taxon>Bacteria</taxon>
        <taxon>Pseudomonadati</taxon>
        <taxon>Pseudomonadota</taxon>
        <taxon>Gammaproteobacteria</taxon>
        <taxon>Legionellales</taxon>
        <taxon>Legionellaceae</taxon>
        <taxon>Legionella</taxon>
    </lineage>
</organism>
<keyword id="KW-0560">Oxidoreductase</keyword>
<reference key="1">
    <citation type="journal article" date="2004" name="Nat. Genet.">
        <title>Evidence in the Legionella pneumophila genome for exploitation of host cell functions and high genome plasticity.</title>
        <authorList>
            <person name="Cazalet C."/>
            <person name="Rusniok C."/>
            <person name="Brueggemann H."/>
            <person name="Zidane N."/>
            <person name="Magnier A."/>
            <person name="Ma L."/>
            <person name="Tichit M."/>
            <person name="Jarraud S."/>
            <person name="Bouchier C."/>
            <person name="Vandenesch F."/>
            <person name="Kunst F."/>
            <person name="Etienne J."/>
            <person name="Glaser P."/>
            <person name="Buchrieser C."/>
        </authorList>
    </citation>
    <scope>NUCLEOTIDE SEQUENCE [LARGE SCALE GENOMIC DNA]</scope>
    <source>
        <strain>Paris</strain>
    </source>
</reference>
<protein>
    <recommendedName>
        <fullName evidence="1">Probable glycine dehydrogenase (decarboxylating) subunit 1</fullName>
        <ecNumber evidence="1">1.4.4.2</ecNumber>
    </recommendedName>
    <alternativeName>
        <fullName evidence="1">Glycine cleavage system P-protein subunit 1</fullName>
    </alternativeName>
    <alternativeName>
        <fullName evidence="1">Glycine decarboxylase subunit 1</fullName>
    </alternativeName>
    <alternativeName>
        <fullName evidence="1">Glycine dehydrogenase (aminomethyl-transferring) subunit 1</fullName>
    </alternativeName>
</protein>
<dbReference type="EC" id="1.4.4.2" evidence="1"/>
<dbReference type="EMBL" id="CR628336">
    <property type="protein sequence ID" value="CAH11278.1"/>
    <property type="molecule type" value="Genomic_DNA"/>
</dbReference>
<dbReference type="RefSeq" id="WP_011212768.1">
    <property type="nucleotide sequence ID" value="NC_006368.1"/>
</dbReference>
<dbReference type="SMR" id="Q5X8W3"/>
<dbReference type="KEGG" id="lpp:lpp0130"/>
<dbReference type="LegioList" id="lpp0130"/>
<dbReference type="HOGENOM" id="CLU_004620_0_2_6"/>
<dbReference type="GO" id="GO:0004375">
    <property type="term" value="F:glycine dehydrogenase (decarboxylating) activity"/>
    <property type="evidence" value="ECO:0007669"/>
    <property type="project" value="UniProtKB-EC"/>
</dbReference>
<dbReference type="GO" id="GO:0019464">
    <property type="term" value="P:glycine decarboxylation via glycine cleavage system"/>
    <property type="evidence" value="ECO:0007669"/>
    <property type="project" value="UniProtKB-UniRule"/>
</dbReference>
<dbReference type="GO" id="GO:0009116">
    <property type="term" value="P:nucleoside metabolic process"/>
    <property type="evidence" value="ECO:0007669"/>
    <property type="project" value="InterPro"/>
</dbReference>
<dbReference type="CDD" id="cd00613">
    <property type="entry name" value="GDC-P"/>
    <property type="match status" value="1"/>
</dbReference>
<dbReference type="Gene3D" id="3.90.1150.10">
    <property type="entry name" value="Aspartate Aminotransferase, domain 1"/>
    <property type="match status" value="1"/>
</dbReference>
<dbReference type="Gene3D" id="3.40.640.10">
    <property type="entry name" value="Type I PLP-dependent aspartate aminotransferase-like (Major domain)"/>
    <property type="match status" value="1"/>
</dbReference>
<dbReference type="HAMAP" id="MF_00712">
    <property type="entry name" value="GcvPA"/>
    <property type="match status" value="1"/>
</dbReference>
<dbReference type="InterPro" id="IPR023010">
    <property type="entry name" value="GcvPA"/>
</dbReference>
<dbReference type="InterPro" id="IPR049315">
    <property type="entry name" value="GDC-P_N"/>
</dbReference>
<dbReference type="InterPro" id="IPR020581">
    <property type="entry name" value="GDC_P"/>
</dbReference>
<dbReference type="InterPro" id="IPR015424">
    <property type="entry name" value="PyrdxlP-dep_Trfase"/>
</dbReference>
<dbReference type="InterPro" id="IPR015421">
    <property type="entry name" value="PyrdxlP-dep_Trfase_major"/>
</dbReference>
<dbReference type="InterPro" id="IPR015422">
    <property type="entry name" value="PyrdxlP-dep_Trfase_small"/>
</dbReference>
<dbReference type="NCBIfam" id="NF001696">
    <property type="entry name" value="PRK00451.1"/>
    <property type="match status" value="1"/>
</dbReference>
<dbReference type="PANTHER" id="PTHR42806">
    <property type="entry name" value="GLYCINE CLEAVAGE SYSTEM P-PROTEIN"/>
    <property type="match status" value="1"/>
</dbReference>
<dbReference type="PANTHER" id="PTHR42806:SF1">
    <property type="entry name" value="GLYCINE DEHYDROGENASE (DECARBOXYLATING)"/>
    <property type="match status" value="1"/>
</dbReference>
<dbReference type="Pfam" id="PF02347">
    <property type="entry name" value="GDC-P"/>
    <property type="match status" value="1"/>
</dbReference>
<dbReference type="PIRSF" id="PIRSF006815">
    <property type="entry name" value="GcvPA"/>
    <property type="match status" value="1"/>
</dbReference>
<dbReference type="SUPFAM" id="SSF53383">
    <property type="entry name" value="PLP-dependent transferases"/>
    <property type="match status" value="1"/>
</dbReference>
<accession>Q5X8W3</accession>
<sequence length="456" mass="49862">MPYIPHTPNDTKEMLTAVGAQDIQDLFDEIPASLQYAGFQSIPAGINEMEMLKEAQNQAQKNRNGICFIGAGCYEHHIPAAVWDIASRGEFLTAYTPYQAEASQGTLQLLYEYQTMICELTGMEVSNASMYDGATALAEAVLMAVRLNKHSKTNRVLITGTVHPFYRETIETIVRNQHIEVITLPFDEQQGITDFGSLNQYTGEDITALVIAQPNFFGCLEQVDKMTSWAHHNKTISVACVNPTSLALLKPPCSWGEHGVEIVCGEGQPLGSPMASGGPYFGFLSTRMAHVRQMPGRIIGRTVDKDGKTGFSLTLQAREQHIRRAKATSNICTNQGLLVTAATIYMSLLGPEGLSQVATQCHQNTHELITALTQIEGVELAFKAPFFHEALIKLNQPVQSVLQQLADAGIAGGYAPEQHYPQLANTLLVCATEVRSAEDIAKYAKTLKTIMSKRGA</sequence>
<comment type="function">
    <text evidence="1">The glycine cleavage system catalyzes the degradation of glycine. The P protein binds the alpha-amino group of glycine through its pyridoxal phosphate cofactor; CO(2) is released and the remaining methylamine moiety is then transferred to the lipoamide cofactor of the H protein.</text>
</comment>
<comment type="catalytic activity">
    <reaction evidence="1">
        <text>N(6)-[(R)-lipoyl]-L-lysyl-[glycine-cleavage complex H protein] + glycine + H(+) = N(6)-[(R)-S(8)-aminomethyldihydrolipoyl]-L-lysyl-[glycine-cleavage complex H protein] + CO2</text>
        <dbReference type="Rhea" id="RHEA:24304"/>
        <dbReference type="Rhea" id="RHEA-COMP:10494"/>
        <dbReference type="Rhea" id="RHEA-COMP:10495"/>
        <dbReference type="ChEBI" id="CHEBI:15378"/>
        <dbReference type="ChEBI" id="CHEBI:16526"/>
        <dbReference type="ChEBI" id="CHEBI:57305"/>
        <dbReference type="ChEBI" id="CHEBI:83099"/>
        <dbReference type="ChEBI" id="CHEBI:83143"/>
        <dbReference type="EC" id="1.4.4.2"/>
    </reaction>
</comment>
<comment type="subunit">
    <text evidence="1">The glycine cleavage system is composed of four proteins: P, T, L and H. In this organism, the P 'protein' is a heterodimer of two subunits.</text>
</comment>
<comment type="similarity">
    <text evidence="1">Belongs to the GcvP family. N-terminal subunit subfamily.</text>
</comment>